<proteinExistence type="predicted"/>
<gene>
    <name type="ORF">SPBC14F5.01</name>
    <name type="ORF">SPBC1861.10</name>
</gene>
<accession>O60098</accession>
<accession>Q9USX6</accession>
<organism>
    <name type="scientific">Schizosaccharomyces pombe (strain 972 / ATCC 24843)</name>
    <name type="common">Fission yeast</name>
    <dbReference type="NCBI Taxonomy" id="284812"/>
    <lineage>
        <taxon>Eukaryota</taxon>
        <taxon>Fungi</taxon>
        <taxon>Dikarya</taxon>
        <taxon>Ascomycota</taxon>
        <taxon>Taphrinomycotina</taxon>
        <taxon>Schizosaccharomycetes</taxon>
        <taxon>Schizosaccharomycetales</taxon>
        <taxon>Schizosaccharomycetaceae</taxon>
        <taxon>Schizosaccharomyces</taxon>
    </lineage>
</organism>
<keyword id="KW-1185">Reference proteome</keyword>
<protein>
    <recommendedName>
        <fullName>Uncharacterized protein C14F5.01</fullName>
    </recommendedName>
</protein>
<reference key="1">
    <citation type="journal article" date="2002" name="Nature">
        <title>The genome sequence of Schizosaccharomyces pombe.</title>
        <authorList>
            <person name="Wood V."/>
            <person name="Gwilliam R."/>
            <person name="Rajandream M.A."/>
            <person name="Lyne M.H."/>
            <person name="Lyne R."/>
            <person name="Stewart A."/>
            <person name="Sgouros J.G."/>
            <person name="Peat N."/>
            <person name="Hayles J."/>
            <person name="Baker S.G."/>
            <person name="Basham D."/>
            <person name="Bowman S."/>
            <person name="Brooks K."/>
            <person name="Brown D."/>
            <person name="Brown S."/>
            <person name="Chillingworth T."/>
            <person name="Churcher C.M."/>
            <person name="Collins M."/>
            <person name="Connor R."/>
            <person name="Cronin A."/>
            <person name="Davis P."/>
            <person name="Feltwell T."/>
            <person name="Fraser A."/>
            <person name="Gentles S."/>
            <person name="Goble A."/>
            <person name="Hamlin N."/>
            <person name="Harris D.E."/>
            <person name="Hidalgo J."/>
            <person name="Hodgson G."/>
            <person name="Holroyd S."/>
            <person name="Hornsby T."/>
            <person name="Howarth S."/>
            <person name="Huckle E.J."/>
            <person name="Hunt S."/>
            <person name="Jagels K."/>
            <person name="James K.D."/>
            <person name="Jones L."/>
            <person name="Jones M."/>
            <person name="Leather S."/>
            <person name="McDonald S."/>
            <person name="McLean J."/>
            <person name="Mooney P."/>
            <person name="Moule S."/>
            <person name="Mungall K.L."/>
            <person name="Murphy L.D."/>
            <person name="Niblett D."/>
            <person name="Odell C."/>
            <person name="Oliver K."/>
            <person name="O'Neil S."/>
            <person name="Pearson D."/>
            <person name="Quail M.A."/>
            <person name="Rabbinowitsch E."/>
            <person name="Rutherford K.M."/>
            <person name="Rutter S."/>
            <person name="Saunders D."/>
            <person name="Seeger K."/>
            <person name="Sharp S."/>
            <person name="Skelton J."/>
            <person name="Simmonds M.N."/>
            <person name="Squares R."/>
            <person name="Squares S."/>
            <person name="Stevens K."/>
            <person name="Taylor K."/>
            <person name="Taylor R.G."/>
            <person name="Tivey A."/>
            <person name="Walsh S.V."/>
            <person name="Warren T."/>
            <person name="Whitehead S."/>
            <person name="Woodward J.R."/>
            <person name="Volckaert G."/>
            <person name="Aert R."/>
            <person name="Robben J."/>
            <person name="Grymonprez B."/>
            <person name="Weltjens I."/>
            <person name="Vanstreels E."/>
            <person name="Rieger M."/>
            <person name="Schaefer M."/>
            <person name="Mueller-Auer S."/>
            <person name="Gabel C."/>
            <person name="Fuchs M."/>
            <person name="Duesterhoeft A."/>
            <person name="Fritzc C."/>
            <person name="Holzer E."/>
            <person name="Moestl D."/>
            <person name="Hilbert H."/>
            <person name="Borzym K."/>
            <person name="Langer I."/>
            <person name="Beck A."/>
            <person name="Lehrach H."/>
            <person name="Reinhardt R."/>
            <person name="Pohl T.M."/>
            <person name="Eger P."/>
            <person name="Zimmermann W."/>
            <person name="Wedler H."/>
            <person name="Wambutt R."/>
            <person name="Purnelle B."/>
            <person name="Goffeau A."/>
            <person name="Cadieu E."/>
            <person name="Dreano S."/>
            <person name="Gloux S."/>
            <person name="Lelaure V."/>
            <person name="Mottier S."/>
            <person name="Galibert F."/>
            <person name="Aves S.J."/>
            <person name="Xiang Z."/>
            <person name="Hunt C."/>
            <person name="Moore K."/>
            <person name="Hurst S.M."/>
            <person name="Lucas M."/>
            <person name="Rochet M."/>
            <person name="Gaillardin C."/>
            <person name="Tallada V.A."/>
            <person name="Garzon A."/>
            <person name="Thode G."/>
            <person name="Daga R.R."/>
            <person name="Cruzado L."/>
            <person name="Jimenez J."/>
            <person name="Sanchez M."/>
            <person name="del Rey F."/>
            <person name="Benito J."/>
            <person name="Dominguez A."/>
            <person name="Revuelta J.L."/>
            <person name="Moreno S."/>
            <person name="Armstrong J."/>
            <person name="Forsburg S.L."/>
            <person name="Cerutti L."/>
            <person name="Lowe T."/>
            <person name="McCombie W.R."/>
            <person name="Paulsen I."/>
            <person name="Potashkin J."/>
            <person name="Shpakovski G.V."/>
            <person name="Ussery D."/>
            <person name="Barrell B.G."/>
            <person name="Nurse P."/>
        </authorList>
    </citation>
    <scope>NUCLEOTIDE SEQUENCE [LARGE SCALE GENOMIC DNA]</scope>
    <source>
        <strain>972 / ATCC 24843</strain>
    </source>
</reference>
<dbReference type="EMBL" id="CU329671">
    <property type="protein sequence ID" value="CAB52746.2"/>
    <property type="molecule type" value="Genomic_DNA"/>
</dbReference>
<dbReference type="PIR" id="T39749">
    <property type="entry name" value="T39749"/>
</dbReference>
<dbReference type="RefSeq" id="NP_596727.2">
    <property type="nucleotide sequence ID" value="NM_001022652.3"/>
</dbReference>
<dbReference type="PaxDb" id="4896-SPBC14F5.01.1"/>
<dbReference type="EnsemblFungi" id="SPBC14F5.01.1">
    <property type="protein sequence ID" value="SPBC14F5.01.1:pep"/>
    <property type="gene ID" value="SPBC14F5.01"/>
</dbReference>
<dbReference type="KEGG" id="spo:2539849"/>
<dbReference type="PomBase" id="SPBC14F5.01"/>
<dbReference type="VEuPathDB" id="FungiDB:SPBC14F5.01"/>
<dbReference type="HOGENOM" id="CLU_990981_0_0_1"/>
<dbReference type="InParanoid" id="O60098"/>
<dbReference type="OMA" id="CLLNYGA"/>
<dbReference type="PRO" id="PR:O60098"/>
<dbReference type="Proteomes" id="UP000002485">
    <property type="component" value="Chromosome II"/>
</dbReference>
<dbReference type="GO" id="GO:0005829">
    <property type="term" value="C:cytosol"/>
    <property type="evidence" value="ECO:0007005"/>
    <property type="project" value="PomBase"/>
</dbReference>
<dbReference type="GO" id="GO:0005634">
    <property type="term" value="C:nucleus"/>
    <property type="evidence" value="ECO:0007005"/>
    <property type="project" value="PomBase"/>
</dbReference>
<dbReference type="InterPro" id="IPR027850">
    <property type="entry name" value="DUF4504"/>
</dbReference>
<dbReference type="PANTHER" id="PTHR31366">
    <property type="entry name" value="UPF0739 PROTEIN C1ORF74"/>
    <property type="match status" value="1"/>
</dbReference>
<dbReference type="PANTHER" id="PTHR31366:SF2">
    <property type="entry name" value="UPF0739 PROTEIN C1ORF74"/>
    <property type="match status" value="1"/>
</dbReference>
<dbReference type="Pfam" id="PF14953">
    <property type="entry name" value="DUF4504"/>
    <property type="match status" value="1"/>
</dbReference>
<sequence>MKRSYKDIIRFLKLIGISHSTAIKLVDGILPVMIGLKTSYLVDCVFLEISELREIIEFVGPDCLRGIYFTEPISQCFVLHVANWEEWSSIDSLVPIVVDLPSKKQNRLLQSCITKHVDRLLDLCKRNLSTFTIDISSSWRQNIIENNEQKEFECTSTAITGCLLNYGATYNYDHTLFKDNGLSCETLKLYTLEVHSKKKDVSDTLIQFSCVNQFEEPVTSNIQRLTSLYQTRWKRINSEEKRNWEEWIKHKYKIPNDTNIELEFCFSVTDRKEQSVIL</sequence>
<name>C14F5_SCHPO</name>
<feature type="chain" id="PRO_0000116880" description="Uncharacterized protein C14F5.01">
    <location>
        <begin position="1"/>
        <end position="278"/>
    </location>
</feature>